<proteinExistence type="inferred from homology"/>
<reference key="1">
    <citation type="journal article" date="2002" name="Proc. Natl. Acad. Sci. U.S.A.">
        <title>Complete genome sequence of Clostridium perfringens, an anaerobic flesh-eater.</title>
        <authorList>
            <person name="Shimizu T."/>
            <person name="Ohtani K."/>
            <person name="Hirakawa H."/>
            <person name="Ohshima K."/>
            <person name="Yamashita A."/>
            <person name="Shiba T."/>
            <person name="Ogasawara N."/>
            <person name="Hattori M."/>
            <person name="Kuhara S."/>
            <person name="Hayashi H."/>
        </authorList>
    </citation>
    <scope>NUCLEOTIDE SEQUENCE [LARGE SCALE GENOMIC DNA]</scope>
    <source>
        <strain>13 / Type A</strain>
    </source>
</reference>
<keyword id="KW-0378">Hydrolase</keyword>
<keyword id="KW-1185">Reference proteome</keyword>
<evidence type="ECO:0000255" key="1">
    <source>
        <dbReference type="PROSITE-ProRule" id="PRU00520"/>
    </source>
</evidence>
<evidence type="ECO:0000305" key="2"/>
<accession>Q8XIZ0</accession>
<organism>
    <name type="scientific">Clostridium perfringens (strain 13 / Type A)</name>
    <dbReference type="NCBI Taxonomy" id="195102"/>
    <lineage>
        <taxon>Bacteria</taxon>
        <taxon>Bacillati</taxon>
        <taxon>Bacillota</taxon>
        <taxon>Clostridia</taxon>
        <taxon>Eubacteriales</taxon>
        <taxon>Clostridiaceae</taxon>
        <taxon>Clostridium</taxon>
    </lineage>
</organism>
<feature type="chain" id="PRO_0000326685" description="Acylphosphatase">
    <location>
        <begin position="1"/>
        <end position="89"/>
    </location>
</feature>
<feature type="domain" description="Acylphosphatase-like" evidence="1">
    <location>
        <begin position="3"/>
        <end position="89"/>
    </location>
</feature>
<feature type="active site" evidence="1">
    <location>
        <position position="18"/>
    </location>
</feature>
<feature type="active site" evidence="1">
    <location>
        <position position="36"/>
    </location>
</feature>
<protein>
    <recommendedName>
        <fullName>Acylphosphatase</fullName>
        <ecNumber>3.6.1.7</ecNumber>
    </recommendedName>
    <alternativeName>
        <fullName>Acylphosphate phosphohydrolase</fullName>
    </alternativeName>
</protein>
<gene>
    <name type="primary">acyP</name>
    <name type="ordered locus">CPE1973</name>
</gene>
<comment type="catalytic activity">
    <reaction>
        <text>an acyl phosphate + H2O = a carboxylate + phosphate + H(+)</text>
        <dbReference type="Rhea" id="RHEA:14965"/>
        <dbReference type="ChEBI" id="CHEBI:15377"/>
        <dbReference type="ChEBI" id="CHEBI:15378"/>
        <dbReference type="ChEBI" id="CHEBI:29067"/>
        <dbReference type="ChEBI" id="CHEBI:43474"/>
        <dbReference type="ChEBI" id="CHEBI:59918"/>
        <dbReference type="EC" id="3.6.1.7"/>
    </reaction>
</comment>
<comment type="similarity">
    <text evidence="2">Belongs to the acylphosphatase family.</text>
</comment>
<name>ACYP_CLOPE</name>
<dbReference type="EC" id="3.6.1.7"/>
<dbReference type="EMBL" id="BA000016">
    <property type="protein sequence ID" value="BAB81679.1"/>
    <property type="molecule type" value="Genomic_DNA"/>
</dbReference>
<dbReference type="RefSeq" id="WP_003461780.1">
    <property type="nucleotide sequence ID" value="NC_003366.1"/>
</dbReference>
<dbReference type="SMR" id="Q8XIZ0"/>
<dbReference type="STRING" id="195102.gene:10491242"/>
<dbReference type="KEGG" id="cpe:CPE1973"/>
<dbReference type="HOGENOM" id="CLU_141932_2_1_9"/>
<dbReference type="Proteomes" id="UP000000818">
    <property type="component" value="Chromosome"/>
</dbReference>
<dbReference type="GO" id="GO:0003998">
    <property type="term" value="F:acylphosphatase activity"/>
    <property type="evidence" value="ECO:0007669"/>
    <property type="project" value="UniProtKB-EC"/>
</dbReference>
<dbReference type="Gene3D" id="3.30.70.100">
    <property type="match status" value="1"/>
</dbReference>
<dbReference type="InterPro" id="IPR020456">
    <property type="entry name" value="Acylphosphatase"/>
</dbReference>
<dbReference type="InterPro" id="IPR001792">
    <property type="entry name" value="Acylphosphatase-like_dom"/>
</dbReference>
<dbReference type="InterPro" id="IPR036046">
    <property type="entry name" value="Acylphosphatase-like_dom_sf"/>
</dbReference>
<dbReference type="InterPro" id="IPR017968">
    <property type="entry name" value="Acylphosphatase_CS"/>
</dbReference>
<dbReference type="PANTHER" id="PTHR47268">
    <property type="entry name" value="ACYLPHOSPHATASE"/>
    <property type="match status" value="1"/>
</dbReference>
<dbReference type="PANTHER" id="PTHR47268:SF4">
    <property type="entry name" value="ACYLPHOSPHATASE"/>
    <property type="match status" value="1"/>
</dbReference>
<dbReference type="Pfam" id="PF00708">
    <property type="entry name" value="Acylphosphatase"/>
    <property type="match status" value="1"/>
</dbReference>
<dbReference type="SUPFAM" id="SSF54975">
    <property type="entry name" value="Acylphosphatase/BLUF domain-like"/>
    <property type="match status" value="1"/>
</dbReference>
<dbReference type="PROSITE" id="PS00150">
    <property type="entry name" value="ACYLPHOSPHATASE_1"/>
    <property type="match status" value="1"/>
</dbReference>
<dbReference type="PROSITE" id="PS51160">
    <property type="entry name" value="ACYLPHOSPHATASE_3"/>
    <property type="match status" value="1"/>
</dbReference>
<sequence>MIRKEFLVSGRVQGVGFRFFCKYQASLLSLTGYAENLDDGQVLIEVQGDESSIRKFKTKILNGNGFSRVISIDEKDLTVDTREKRFSTY</sequence>